<protein>
    <recommendedName>
        <fullName evidence="1">tRNA modification GTPase MnmE</fullName>
        <ecNumber evidence="1">3.6.-.-</ecNumber>
    </recommendedName>
</protein>
<name>MNME_DECAR</name>
<dbReference type="EC" id="3.6.-.-" evidence="1"/>
<dbReference type="EMBL" id="CP000089">
    <property type="protein sequence ID" value="AAZ48926.1"/>
    <property type="molecule type" value="Genomic_DNA"/>
</dbReference>
<dbReference type="SMR" id="Q477Q5"/>
<dbReference type="STRING" id="159087.Daro_4200"/>
<dbReference type="KEGG" id="dar:Daro_4200"/>
<dbReference type="eggNOG" id="COG0486">
    <property type="taxonomic scope" value="Bacteria"/>
</dbReference>
<dbReference type="HOGENOM" id="CLU_019624_4_1_4"/>
<dbReference type="OrthoDB" id="9805918at2"/>
<dbReference type="GO" id="GO:0005829">
    <property type="term" value="C:cytosol"/>
    <property type="evidence" value="ECO:0007669"/>
    <property type="project" value="TreeGrafter"/>
</dbReference>
<dbReference type="GO" id="GO:0005525">
    <property type="term" value="F:GTP binding"/>
    <property type="evidence" value="ECO:0007669"/>
    <property type="project" value="UniProtKB-UniRule"/>
</dbReference>
<dbReference type="GO" id="GO:0003924">
    <property type="term" value="F:GTPase activity"/>
    <property type="evidence" value="ECO:0007669"/>
    <property type="project" value="UniProtKB-UniRule"/>
</dbReference>
<dbReference type="GO" id="GO:0046872">
    <property type="term" value="F:metal ion binding"/>
    <property type="evidence" value="ECO:0007669"/>
    <property type="project" value="UniProtKB-KW"/>
</dbReference>
<dbReference type="GO" id="GO:0030488">
    <property type="term" value="P:tRNA methylation"/>
    <property type="evidence" value="ECO:0007669"/>
    <property type="project" value="TreeGrafter"/>
</dbReference>
<dbReference type="GO" id="GO:0002098">
    <property type="term" value="P:tRNA wobble uridine modification"/>
    <property type="evidence" value="ECO:0007669"/>
    <property type="project" value="TreeGrafter"/>
</dbReference>
<dbReference type="CDD" id="cd04164">
    <property type="entry name" value="trmE"/>
    <property type="match status" value="1"/>
</dbReference>
<dbReference type="CDD" id="cd14858">
    <property type="entry name" value="TrmE_N"/>
    <property type="match status" value="1"/>
</dbReference>
<dbReference type="FunFam" id="3.40.50.300:FF:001376">
    <property type="entry name" value="tRNA modification GTPase MnmE"/>
    <property type="match status" value="1"/>
</dbReference>
<dbReference type="Gene3D" id="3.40.50.300">
    <property type="entry name" value="P-loop containing nucleotide triphosphate hydrolases"/>
    <property type="match status" value="1"/>
</dbReference>
<dbReference type="Gene3D" id="3.30.1360.120">
    <property type="entry name" value="Probable tRNA modification gtpase trme, domain 1"/>
    <property type="match status" value="1"/>
</dbReference>
<dbReference type="Gene3D" id="1.20.120.430">
    <property type="entry name" value="tRNA modification GTPase MnmE domain 2"/>
    <property type="match status" value="1"/>
</dbReference>
<dbReference type="HAMAP" id="MF_00379">
    <property type="entry name" value="GTPase_MnmE"/>
    <property type="match status" value="1"/>
</dbReference>
<dbReference type="InterPro" id="IPR031168">
    <property type="entry name" value="G_TrmE"/>
</dbReference>
<dbReference type="InterPro" id="IPR006073">
    <property type="entry name" value="GTP-bd"/>
</dbReference>
<dbReference type="InterPro" id="IPR018948">
    <property type="entry name" value="GTP-bd_TrmE_N"/>
</dbReference>
<dbReference type="InterPro" id="IPR004520">
    <property type="entry name" value="GTPase_MnmE"/>
</dbReference>
<dbReference type="InterPro" id="IPR027368">
    <property type="entry name" value="MnmE_dom2"/>
</dbReference>
<dbReference type="InterPro" id="IPR025867">
    <property type="entry name" value="MnmE_helical"/>
</dbReference>
<dbReference type="InterPro" id="IPR027417">
    <property type="entry name" value="P-loop_NTPase"/>
</dbReference>
<dbReference type="InterPro" id="IPR005225">
    <property type="entry name" value="Small_GTP-bd"/>
</dbReference>
<dbReference type="InterPro" id="IPR027266">
    <property type="entry name" value="TrmE/GcvT_dom1"/>
</dbReference>
<dbReference type="NCBIfam" id="TIGR00450">
    <property type="entry name" value="mnmE_trmE_thdF"/>
    <property type="match status" value="1"/>
</dbReference>
<dbReference type="NCBIfam" id="NF003661">
    <property type="entry name" value="PRK05291.1-3"/>
    <property type="match status" value="1"/>
</dbReference>
<dbReference type="NCBIfam" id="TIGR00231">
    <property type="entry name" value="small_GTP"/>
    <property type="match status" value="1"/>
</dbReference>
<dbReference type="PANTHER" id="PTHR42714">
    <property type="entry name" value="TRNA MODIFICATION GTPASE GTPBP3"/>
    <property type="match status" value="1"/>
</dbReference>
<dbReference type="PANTHER" id="PTHR42714:SF2">
    <property type="entry name" value="TRNA MODIFICATION GTPASE GTPBP3, MITOCHONDRIAL"/>
    <property type="match status" value="1"/>
</dbReference>
<dbReference type="Pfam" id="PF01926">
    <property type="entry name" value="MMR_HSR1"/>
    <property type="match status" value="1"/>
</dbReference>
<dbReference type="Pfam" id="PF12631">
    <property type="entry name" value="MnmE_helical"/>
    <property type="match status" value="1"/>
</dbReference>
<dbReference type="Pfam" id="PF10396">
    <property type="entry name" value="TrmE_N"/>
    <property type="match status" value="1"/>
</dbReference>
<dbReference type="PRINTS" id="PR00449">
    <property type="entry name" value="RASTRNSFRMNG"/>
</dbReference>
<dbReference type="SUPFAM" id="SSF52540">
    <property type="entry name" value="P-loop containing nucleoside triphosphate hydrolases"/>
    <property type="match status" value="1"/>
</dbReference>
<dbReference type="SUPFAM" id="SSF116878">
    <property type="entry name" value="TrmE connector domain"/>
    <property type="match status" value="1"/>
</dbReference>
<dbReference type="PROSITE" id="PS51709">
    <property type="entry name" value="G_TRME"/>
    <property type="match status" value="1"/>
</dbReference>
<reference key="1">
    <citation type="journal article" date="2009" name="BMC Genomics">
        <title>Metabolic analysis of the soil microbe Dechloromonas aromatica str. RCB: indications of a surprisingly complex life-style and cryptic anaerobic pathways for aromatic degradation.</title>
        <authorList>
            <person name="Salinero K.K."/>
            <person name="Keller K."/>
            <person name="Feil W.S."/>
            <person name="Feil H."/>
            <person name="Trong S."/>
            <person name="Di Bartolo G."/>
            <person name="Lapidus A."/>
        </authorList>
    </citation>
    <scope>NUCLEOTIDE SEQUENCE [LARGE SCALE GENOMIC DNA]</scope>
    <source>
        <strain>RCB</strain>
    </source>
</reference>
<evidence type="ECO:0000255" key="1">
    <source>
        <dbReference type="HAMAP-Rule" id="MF_00379"/>
    </source>
</evidence>
<sequence length="448" mass="48533">MKSDTIAAIATAPGRGGVGVIRISGSNLLPFAFALTEKTPKPRYASLADFKAADGSTIDTGLLLYFPNPQSFTGEDVLELQGHGGPVVMQMLLARCLDLGARLAEPGEFSRRAFLNGKMDLAQAEAVADLIDAATASAARSAVRSLQGEFSRAIGELNDELINLRMLVEATLDFPEEDIDFLKAANAFGRLERLQLKLAEIFDRAGQGKLLQSGLHVVLAGQPNVGKSSLLNRLAGDDLAIVTPIAGTTRDALRSTIQIEGIPLHIIDTAGLRETDDEVEKIGIERSWKEIERSDVVLLLVDARTGVSESDREILARLPDRLQRITVYNKIDLTHRAAERHDEANGTAISLSAKANQGIELLRQELLRIAGWHQAEDVFIARERHLRALSAAQEHVAAARNVVEGALPALELFAEELRLAQQSLGEITGEFTADDLLGVIFSRFCIGK</sequence>
<comment type="function">
    <text evidence="1">Exhibits a very high intrinsic GTPase hydrolysis rate. Involved in the addition of a carboxymethylaminomethyl (cmnm) group at the wobble position (U34) of certain tRNAs, forming tRNA-cmnm(5)s(2)U34.</text>
</comment>
<comment type="cofactor">
    <cofactor evidence="1">
        <name>K(+)</name>
        <dbReference type="ChEBI" id="CHEBI:29103"/>
    </cofactor>
    <text evidence="1">Binds 1 potassium ion per subunit.</text>
</comment>
<comment type="subunit">
    <text evidence="1">Homodimer. Heterotetramer of two MnmE and two MnmG subunits.</text>
</comment>
<comment type="subcellular location">
    <subcellularLocation>
        <location evidence="1">Cytoplasm</location>
    </subcellularLocation>
</comment>
<comment type="similarity">
    <text evidence="1">Belongs to the TRAFAC class TrmE-Era-EngA-EngB-Septin-like GTPase superfamily. TrmE GTPase family.</text>
</comment>
<keyword id="KW-0963">Cytoplasm</keyword>
<keyword id="KW-0342">GTP-binding</keyword>
<keyword id="KW-0378">Hydrolase</keyword>
<keyword id="KW-0460">Magnesium</keyword>
<keyword id="KW-0479">Metal-binding</keyword>
<keyword id="KW-0547">Nucleotide-binding</keyword>
<keyword id="KW-0630">Potassium</keyword>
<keyword id="KW-0819">tRNA processing</keyword>
<organism>
    <name type="scientific">Dechloromonas aromatica (strain RCB)</name>
    <dbReference type="NCBI Taxonomy" id="159087"/>
    <lineage>
        <taxon>Bacteria</taxon>
        <taxon>Pseudomonadati</taxon>
        <taxon>Pseudomonadota</taxon>
        <taxon>Betaproteobacteria</taxon>
        <taxon>Rhodocyclales</taxon>
        <taxon>Azonexaceae</taxon>
        <taxon>Dechloromonas</taxon>
    </lineage>
</organism>
<proteinExistence type="inferred from homology"/>
<gene>
    <name evidence="1" type="primary">mnmE</name>
    <name evidence="1" type="synonym">trmE</name>
    <name type="ordered locus">Daro_4200</name>
</gene>
<feature type="chain" id="PRO_0000345768" description="tRNA modification GTPase MnmE">
    <location>
        <begin position="1"/>
        <end position="448"/>
    </location>
</feature>
<feature type="domain" description="TrmE-type G">
    <location>
        <begin position="214"/>
        <end position="371"/>
    </location>
</feature>
<feature type="binding site" evidence="1">
    <location>
        <position position="22"/>
    </location>
    <ligand>
        <name>(6S)-5-formyl-5,6,7,8-tetrahydrofolate</name>
        <dbReference type="ChEBI" id="CHEBI:57457"/>
    </ligand>
</feature>
<feature type="binding site" evidence="1">
    <location>
        <position position="79"/>
    </location>
    <ligand>
        <name>(6S)-5-formyl-5,6,7,8-tetrahydrofolate</name>
        <dbReference type="ChEBI" id="CHEBI:57457"/>
    </ligand>
</feature>
<feature type="binding site" evidence="1">
    <location>
        <position position="118"/>
    </location>
    <ligand>
        <name>(6S)-5-formyl-5,6,7,8-tetrahydrofolate</name>
        <dbReference type="ChEBI" id="CHEBI:57457"/>
    </ligand>
</feature>
<feature type="binding site" evidence="1">
    <location>
        <begin position="224"/>
        <end position="229"/>
    </location>
    <ligand>
        <name>GTP</name>
        <dbReference type="ChEBI" id="CHEBI:37565"/>
    </ligand>
</feature>
<feature type="binding site" evidence="1">
    <location>
        <position position="224"/>
    </location>
    <ligand>
        <name>K(+)</name>
        <dbReference type="ChEBI" id="CHEBI:29103"/>
    </ligand>
</feature>
<feature type="binding site" evidence="1">
    <location>
        <position position="228"/>
    </location>
    <ligand>
        <name>Mg(2+)</name>
        <dbReference type="ChEBI" id="CHEBI:18420"/>
    </ligand>
</feature>
<feature type="binding site" evidence="1">
    <location>
        <begin position="243"/>
        <end position="249"/>
    </location>
    <ligand>
        <name>GTP</name>
        <dbReference type="ChEBI" id="CHEBI:37565"/>
    </ligand>
</feature>
<feature type="binding site" evidence="1">
    <location>
        <position position="243"/>
    </location>
    <ligand>
        <name>K(+)</name>
        <dbReference type="ChEBI" id="CHEBI:29103"/>
    </ligand>
</feature>
<feature type="binding site" evidence="1">
    <location>
        <position position="245"/>
    </location>
    <ligand>
        <name>K(+)</name>
        <dbReference type="ChEBI" id="CHEBI:29103"/>
    </ligand>
</feature>
<feature type="binding site" evidence="1">
    <location>
        <position position="248"/>
    </location>
    <ligand>
        <name>K(+)</name>
        <dbReference type="ChEBI" id="CHEBI:29103"/>
    </ligand>
</feature>
<feature type="binding site" evidence="1">
    <location>
        <position position="249"/>
    </location>
    <ligand>
        <name>Mg(2+)</name>
        <dbReference type="ChEBI" id="CHEBI:18420"/>
    </ligand>
</feature>
<feature type="binding site" evidence="1">
    <location>
        <begin position="268"/>
        <end position="271"/>
    </location>
    <ligand>
        <name>GTP</name>
        <dbReference type="ChEBI" id="CHEBI:37565"/>
    </ligand>
</feature>
<feature type="binding site" evidence="1">
    <location>
        <position position="448"/>
    </location>
    <ligand>
        <name>(6S)-5-formyl-5,6,7,8-tetrahydrofolate</name>
        <dbReference type="ChEBI" id="CHEBI:57457"/>
    </ligand>
</feature>
<accession>Q477Q5</accession>